<accession>A3NYW4</accession>
<evidence type="ECO:0000255" key="1">
    <source>
        <dbReference type="HAMAP-Rule" id="MF_00185"/>
    </source>
</evidence>
<organism>
    <name type="scientific">Burkholderia pseudomallei (strain 1106a)</name>
    <dbReference type="NCBI Taxonomy" id="357348"/>
    <lineage>
        <taxon>Bacteria</taxon>
        <taxon>Pseudomonadati</taxon>
        <taxon>Pseudomonadota</taxon>
        <taxon>Betaproteobacteria</taxon>
        <taxon>Burkholderiales</taxon>
        <taxon>Burkholderiaceae</taxon>
        <taxon>Burkholderia</taxon>
        <taxon>pseudomallei group</taxon>
    </lineage>
</organism>
<name>MIAA_BURP0</name>
<gene>
    <name evidence="1" type="primary">miaA</name>
    <name type="ordered locus">BURPS1106A_3298</name>
</gene>
<reference key="1">
    <citation type="journal article" date="2010" name="Genome Biol. Evol.">
        <title>Continuing evolution of Burkholderia mallei through genome reduction and large-scale rearrangements.</title>
        <authorList>
            <person name="Losada L."/>
            <person name="Ronning C.M."/>
            <person name="DeShazer D."/>
            <person name="Woods D."/>
            <person name="Fedorova N."/>
            <person name="Kim H.S."/>
            <person name="Shabalina S.A."/>
            <person name="Pearson T.R."/>
            <person name="Brinkac L."/>
            <person name="Tan P."/>
            <person name="Nandi T."/>
            <person name="Crabtree J."/>
            <person name="Badger J."/>
            <person name="Beckstrom-Sternberg S."/>
            <person name="Saqib M."/>
            <person name="Schutzer S.E."/>
            <person name="Keim P."/>
            <person name="Nierman W.C."/>
        </authorList>
    </citation>
    <scope>NUCLEOTIDE SEQUENCE [LARGE SCALE GENOMIC DNA]</scope>
    <source>
        <strain>1106a</strain>
    </source>
</reference>
<comment type="function">
    <text evidence="1">Catalyzes the transfer of a dimethylallyl group onto the adenine at position 37 in tRNAs that read codons beginning with uridine, leading to the formation of N6-(dimethylallyl)adenosine (i(6)A).</text>
</comment>
<comment type="catalytic activity">
    <reaction evidence="1">
        <text>adenosine(37) in tRNA + dimethylallyl diphosphate = N(6)-dimethylallyladenosine(37) in tRNA + diphosphate</text>
        <dbReference type="Rhea" id="RHEA:26482"/>
        <dbReference type="Rhea" id="RHEA-COMP:10162"/>
        <dbReference type="Rhea" id="RHEA-COMP:10375"/>
        <dbReference type="ChEBI" id="CHEBI:33019"/>
        <dbReference type="ChEBI" id="CHEBI:57623"/>
        <dbReference type="ChEBI" id="CHEBI:74411"/>
        <dbReference type="ChEBI" id="CHEBI:74415"/>
        <dbReference type="EC" id="2.5.1.75"/>
    </reaction>
</comment>
<comment type="cofactor">
    <cofactor evidence="1">
        <name>Mg(2+)</name>
        <dbReference type="ChEBI" id="CHEBI:18420"/>
    </cofactor>
</comment>
<comment type="subunit">
    <text evidence="1">Monomer.</text>
</comment>
<comment type="similarity">
    <text evidence="1">Belongs to the IPP transferase family.</text>
</comment>
<dbReference type="EC" id="2.5.1.75" evidence="1"/>
<dbReference type="EMBL" id="CP000572">
    <property type="protein sequence ID" value="ABN90648.1"/>
    <property type="molecule type" value="Genomic_DNA"/>
</dbReference>
<dbReference type="RefSeq" id="WP_004527674.1">
    <property type="nucleotide sequence ID" value="NC_009076.1"/>
</dbReference>
<dbReference type="SMR" id="A3NYW4"/>
<dbReference type="KEGG" id="bpl:BURPS1106A_3298"/>
<dbReference type="HOGENOM" id="CLU_032616_0_0_4"/>
<dbReference type="Proteomes" id="UP000006738">
    <property type="component" value="Chromosome I"/>
</dbReference>
<dbReference type="GO" id="GO:0005524">
    <property type="term" value="F:ATP binding"/>
    <property type="evidence" value="ECO:0007669"/>
    <property type="project" value="UniProtKB-UniRule"/>
</dbReference>
<dbReference type="GO" id="GO:0052381">
    <property type="term" value="F:tRNA dimethylallyltransferase activity"/>
    <property type="evidence" value="ECO:0007669"/>
    <property type="project" value="UniProtKB-UniRule"/>
</dbReference>
<dbReference type="GO" id="GO:0006400">
    <property type="term" value="P:tRNA modification"/>
    <property type="evidence" value="ECO:0007669"/>
    <property type="project" value="TreeGrafter"/>
</dbReference>
<dbReference type="FunFam" id="1.10.20.140:FF:000001">
    <property type="entry name" value="tRNA dimethylallyltransferase"/>
    <property type="match status" value="1"/>
</dbReference>
<dbReference type="Gene3D" id="1.10.20.140">
    <property type="match status" value="1"/>
</dbReference>
<dbReference type="Gene3D" id="3.40.50.300">
    <property type="entry name" value="P-loop containing nucleotide triphosphate hydrolases"/>
    <property type="match status" value="1"/>
</dbReference>
<dbReference type="HAMAP" id="MF_00185">
    <property type="entry name" value="IPP_trans"/>
    <property type="match status" value="1"/>
</dbReference>
<dbReference type="InterPro" id="IPR039657">
    <property type="entry name" value="Dimethylallyltransferase"/>
</dbReference>
<dbReference type="InterPro" id="IPR018022">
    <property type="entry name" value="IPT"/>
</dbReference>
<dbReference type="InterPro" id="IPR027417">
    <property type="entry name" value="P-loop_NTPase"/>
</dbReference>
<dbReference type="NCBIfam" id="TIGR00174">
    <property type="entry name" value="miaA"/>
    <property type="match status" value="1"/>
</dbReference>
<dbReference type="PANTHER" id="PTHR11088">
    <property type="entry name" value="TRNA DIMETHYLALLYLTRANSFERASE"/>
    <property type="match status" value="1"/>
</dbReference>
<dbReference type="PANTHER" id="PTHR11088:SF60">
    <property type="entry name" value="TRNA DIMETHYLALLYLTRANSFERASE"/>
    <property type="match status" value="1"/>
</dbReference>
<dbReference type="Pfam" id="PF01715">
    <property type="entry name" value="IPPT"/>
    <property type="match status" value="1"/>
</dbReference>
<dbReference type="SUPFAM" id="SSF52540">
    <property type="entry name" value="P-loop containing nucleoside triphosphate hydrolases"/>
    <property type="match status" value="2"/>
</dbReference>
<proteinExistence type="inferred from homology"/>
<protein>
    <recommendedName>
        <fullName evidence="1">tRNA dimethylallyltransferase</fullName>
        <ecNumber evidence="1">2.5.1.75</ecNumber>
    </recommendedName>
    <alternativeName>
        <fullName evidence="1">Dimethylallyl diphosphate:tRNA dimethylallyltransferase</fullName>
        <shortName evidence="1">DMAPP:tRNA dimethylallyltransferase</shortName>
        <shortName evidence="1">DMATase</shortName>
    </alternativeName>
    <alternativeName>
        <fullName evidence="1">Isopentenyl-diphosphate:tRNA isopentenyltransferase</fullName>
        <shortName evidence="1">IPP transferase</shortName>
        <shortName evidence="1">IPPT</shortName>
        <shortName evidence="1">IPTase</shortName>
    </alternativeName>
</protein>
<feature type="chain" id="PRO_1000020576" description="tRNA dimethylallyltransferase">
    <location>
        <begin position="1"/>
        <end position="324"/>
    </location>
</feature>
<feature type="region of interest" description="Interaction with substrate tRNA" evidence="1">
    <location>
        <begin position="42"/>
        <end position="45"/>
    </location>
</feature>
<feature type="region of interest" description="Interaction with substrate tRNA" evidence="1">
    <location>
        <begin position="166"/>
        <end position="170"/>
    </location>
</feature>
<feature type="region of interest" description="Interaction with substrate tRNA" evidence="1">
    <location>
        <begin position="251"/>
        <end position="256"/>
    </location>
</feature>
<feature type="binding site" evidence="1">
    <location>
        <begin position="17"/>
        <end position="24"/>
    </location>
    <ligand>
        <name>ATP</name>
        <dbReference type="ChEBI" id="CHEBI:30616"/>
    </ligand>
</feature>
<feature type="binding site" evidence="1">
    <location>
        <begin position="19"/>
        <end position="24"/>
    </location>
    <ligand>
        <name>substrate</name>
    </ligand>
</feature>
<feature type="site" description="Interaction with substrate tRNA" evidence="1">
    <location>
        <position position="108"/>
    </location>
</feature>
<feature type="site" description="Interaction with substrate tRNA" evidence="1">
    <location>
        <position position="130"/>
    </location>
</feature>
<keyword id="KW-0067">ATP-binding</keyword>
<keyword id="KW-0460">Magnesium</keyword>
<keyword id="KW-0547">Nucleotide-binding</keyword>
<keyword id="KW-0808">Transferase</keyword>
<keyword id="KW-0819">tRNA processing</keyword>
<sequence>MSERNAASARTVACLLGPTASGKTAAALALAARRPIEIVSVDSALVYRGMDIGTAKPTRDERAAVPHHLIDIVDPADAYSAAEFRADALRLVAQIAARGRTPLLAGGTMLYYRALTQGLNDLPAADPDVRATLDADAARDGWPALHARLAGIDPATAARLAPNDSQRIQRALEVYLLTGQPMSALLAAPPRDDDAAAGLRFVPVALEPSERAVLHARIAARFDAMLEAGFIDEVERLRRRDDLHLGLPSMRCVGYRQAWEYLDGCTDYRTMRDKGIFATRQLCKRQLTWLRAMPERIVVDCCAPDATVRAVDALERVLDGRAPA</sequence>